<organism>
    <name type="scientific">Parasynechococcus marenigrum (strain WH8102)</name>
    <dbReference type="NCBI Taxonomy" id="84588"/>
    <lineage>
        <taxon>Bacteria</taxon>
        <taxon>Bacillati</taxon>
        <taxon>Cyanobacteriota</taxon>
        <taxon>Cyanophyceae</taxon>
        <taxon>Synechococcales</taxon>
        <taxon>Prochlorococcaceae</taxon>
        <taxon>Parasynechococcus</taxon>
        <taxon>Parasynechococcus marenigrum</taxon>
    </lineage>
</organism>
<dbReference type="EMBL" id="BX569692">
    <property type="protein sequence ID" value="CAE07629.1"/>
    <property type="molecule type" value="Genomic_DNA"/>
</dbReference>
<dbReference type="RefSeq" id="WP_011127979.1">
    <property type="nucleotide sequence ID" value="NC_005070.1"/>
</dbReference>
<dbReference type="SMR" id="Q7U772"/>
<dbReference type="STRING" id="84588.SYNW1114"/>
<dbReference type="KEGG" id="syw:SYNW1114"/>
<dbReference type="eggNOG" id="COG0755">
    <property type="taxonomic scope" value="Bacteria"/>
</dbReference>
<dbReference type="HOGENOM" id="CLU_049710_2_4_3"/>
<dbReference type="Proteomes" id="UP000001422">
    <property type="component" value="Chromosome"/>
</dbReference>
<dbReference type="GO" id="GO:0031676">
    <property type="term" value="C:plasma membrane-derived thylakoid membrane"/>
    <property type="evidence" value="ECO:0007669"/>
    <property type="project" value="UniProtKB-SubCell"/>
</dbReference>
<dbReference type="GO" id="GO:0020037">
    <property type="term" value="F:heme binding"/>
    <property type="evidence" value="ECO:0007669"/>
    <property type="project" value="InterPro"/>
</dbReference>
<dbReference type="GO" id="GO:0017004">
    <property type="term" value="P:cytochrome complex assembly"/>
    <property type="evidence" value="ECO:0007669"/>
    <property type="project" value="UniProtKB-UniRule"/>
</dbReference>
<dbReference type="HAMAP" id="MF_01391">
    <property type="entry name" value="CytC_CcsA"/>
    <property type="match status" value="1"/>
</dbReference>
<dbReference type="InterPro" id="IPR002541">
    <property type="entry name" value="Cyt_c_assembly"/>
</dbReference>
<dbReference type="InterPro" id="IPR017562">
    <property type="entry name" value="Cyt_c_biogenesis_CcsA"/>
</dbReference>
<dbReference type="InterPro" id="IPR045062">
    <property type="entry name" value="Cyt_c_biogenesis_CcsA/CcmC"/>
</dbReference>
<dbReference type="NCBIfam" id="TIGR03144">
    <property type="entry name" value="cytochr_II_ccsB"/>
    <property type="match status" value="1"/>
</dbReference>
<dbReference type="PANTHER" id="PTHR30071:SF1">
    <property type="entry name" value="CYTOCHROME B_B6 PROTEIN-RELATED"/>
    <property type="match status" value="1"/>
</dbReference>
<dbReference type="PANTHER" id="PTHR30071">
    <property type="entry name" value="HEME EXPORTER PROTEIN C"/>
    <property type="match status" value="1"/>
</dbReference>
<dbReference type="Pfam" id="PF01578">
    <property type="entry name" value="Cytochrom_C_asm"/>
    <property type="match status" value="1"/>
</dbReference>
<reference key="1">
    <citation type="journal article" date="2003" name="Nature">
        <title>The genome of a motile marine Synechococcus.</title>
        <authorList>
            <person name="Palenik B."/>
            <person name="Brahamsha B."/>
            <person name="Larimer F.W."/>
            <person name="Land M.L."/>
            <person name="Hauser L."/>
            <person name="Chain P."/>
            <person name="Lamerdin J.E."/>
            <person name="Regala W."/>
            <person name="Allen E.E."/>
            <person name="McCarren J."/>
            <person name="Paulsen I.T."/>
            <person name="Dufresne A."/>
            <person name="Partensky F."/>
            <person name="Webb E.A."/>
            <person name="Waterbury J."/>
        </authorList>
    </citation>
    <scope>NUCLEOTIDE SEQUENCE [LARGE SCALE GENOMIC DNA]</scope>
    <source>
        <strain>WH8102</strain>
    </source>
</reference>
<sequence>MQSLPFDLVTGLGFGAFLLLLLALPLAFWAVSSQARTGIVQLLVALANLLLTSQLVLRWWESGHFPISNLYESLCFLAWACTLTQLLVERSWPSPIVAAAATPMGLGCIAFASFALPDQLQSAAPLVPALRSSWLVMHVSVIMVSYAALLVGSLLSLAVLLTDRGEALELRSSSIGSGGFRQSMRVGSDGVLQLQSIRLSTGEQLDSLSYRTITVGFLMLTVGIVSGAVWANEAWGSYWSWDPKETWALICWLVYAAYLHTRLSRGWQGRRPALVAVVGLVVIAVCYIGVNLLGIGLHSYGWFLG</sequence>
<gene>
    <name evidence="2" type="primary">ccsA</name>
    <name type="ordered locus">SYNW1114</name>
</gene>
<proteinExistence type="inferred from homology"/>
<evidence type="ECO:0000250" key="1"/>
<evidence type="ECO:0000255" key="2">
    <source>
        <dbReference type="HAMAP-Rule" id="MF_01391"/>
    </source>
</evidence>
<name>CCSA_PARMW</name>
<feature type="chain" id="PRO_5000096219" description="Cytochrome c biogenesis protein CcsA">
    <location>
        <begin position="1"/>
        <end position="305"/>
    </location>
</feature>
<feature type="transmembrane region" description="Helical" evidence="2">
    <location>
        <begin position="11"/>
        <end position="31"/>
    </location>
</feature>
<feature type="transmembrane region" description="Helical" evidence="2">
    <location>
        <begin position="37"/>
        <end position="57"/>
    </location>
</feature>
<feature type="transmembrane region" description="Helical" evidence="2">
    <location>
        <begin position="63"/>
        <end position="83"/>
    </location>
</feature>
<feature type="transmembrane region" description="Helical" evidence="2">
    <location>
        <begin position="96"/>
        <end position="116"/>
    </location>
</feature>
<feature type="transmembrane region" description="Helical" evidence="2">
    <location>
        <begin position="141"/>
        <end position="161"/>
    </location>
</feature>
<feature type="transmembrane region" description="Helical" evidence="2">
    <location>
        <begin position="212"/>
        <end position="232"/>
    </location>
</feature>
<feature type="transmembrane region" description="Helical" evidence="2">
    <location>
        <begin position="246"/>
        <end position="263"/>
    </location>
</feature>
<feature type="transmembrane region" description="Helical" evidence="2">
    <location>
        <begin position="275"/>
        <end position="295"/>
    </location>
</feature>
<comment type="function">
    <text evidence="2">Required during biogenesis of c-type cytochromes (cytochrome c6 and cytochrome f) at the step of heme attachment.</text>
</comment>
<comment type="subunit">
    <text evidence="1">May interact with ccs1.</text>
</comment>
<comment type="subcellular location">
    <subcellularLocation>
        <location evidence="2">Cellular thylakoid membrane</location>
        <topology evidence="2">Multi-pass membrane protein</topology>
    </subcellularLocation>
</comment>
<comment type="similarity">
    <text evidence="2">Belongs to the CcmF/CycK/Ccl1/NrfE/CcsA family.</text>
</comment>
<accession>Q7U772</accession>
<protein>
    <recommendedName>
        <fullName evidence="2">Cytochrome c biogenesis protein CcsA</fullName>
    </recommendedName>
</protein>
<keyword id="KW-0201">Cytochrome c-type biogenesis</keyword>
<keyword id="KW-0472">Membrane</keyword>
<keyword id="KW-0793">Thylakoid</keyword>
<keyword id="KW-0812">Transmembrane</keyword>
<keyword id="KW-1133">Transmembrane helix</keyword>